<accession>Q62LW1</accession>
<dbReference type="EC" id="6.3.4.21" evidence="1"/>
<dbReference type="EMBL" id="CP000010">
    <property type="protein sequence ID" value="AAU49773.1"/>
    <property type="molecule type" value="Genomic_DNA"/>
</dbReference>
<dbReference type="RefSeq" id="WP_004192078.1">
    <property type="nucleotide sequence ID" value="NC_006348.1"/>
</dbReference>
<dbReference type="RefSeq" id="YP_102307.1">
    <property type="nucleotide sequence ID" value="NC_006348.1"/>
</dbReference>
<dbReference type="SMR" id="Q62LW1"/>
<dbReference type="GeneID" id="93061043"/>
<dbReference type="KEGG" id="bma:BMA0510"/>
<dbReference type="PATRIC" id="fig|243160.12.peg.523"/>
<dbReference type="eggNOG" id="COG1488">
    <property type="taxonomic scope" value="Bacteria"/>
</dbReference>
<dbReference type="HOGENOM" id="CLU_030991_1_0_4"/>
<dbReference type="UniPathway" id="UPA00253">
    <property type="reaction ID" value="UER00457"/>
</dbReference>
<dbReference type="Proteomes" id="UP000006693">
    <property type="component" value="Chromosome 1"/>
</dbReference>
<dbReference type="GO" id="GO:0005829">
    <property type="term" value="C:cytosol"/>
    <property type="evidence" value="ECO:0007669"/>
    <property type="project" value="TreeGrafter"/>
</dbReference>
<dbReference type="GO" id="GO:0004516">
    <property type="term" value="F:nicotinate phosphoribosyltransferase activity"/>
    <property type="evidence" value="ECO:0007669"/>
    <property type="project" value="UniProtKB-UniRule"/>
</dbReference>
<dbReference type="GO" id="GO:0034355">
    <property type="term" value="P:NAD biosynthetic process via the salvage pathway"/>
    <property type="evidence" value="ECO:0007669"/>
    <property type="project" value="TreeGrafter"/>
</dbReference>
<dbReference type="CDD" id="cd01401">
    <property type="entry name" value="PncB_like"/>
    <property type="match status" value="1"/>
</dbReference>
<dbReference type="Gene3D" id="3.20.140.10">
    <property type="entry name" value="nicotinate phosphoribosyltransferase"/>
    <property type="match status" value="1"/>
</dbReference>
<dbReference type="HAMAP" id="MF_00570">
    <property type="entry name" value="NAPRTase"/>
    <property type="match status" value="1"/>
</dbReference>
<dbReference type="InterPro" id="IPR041525">
    <property type="entry name" value="N/Namide_PRibTrfase"/>
</dbReference>
<dbReference type="InterPro" id="IPR040727">
    <property type="entry name" value="NAPRTase_N"/>
</dbReference>
<dbReference type="InterPro" id="IPR006406">
    <property type="entry name" value="Nic_PRibTrfase"/>
</dbReference>
<dbReference type="InterPro" id="IPR007229">
    <property type="entry name" value="Nic_PRibTrfase-Fam"/>
</dbReference>
<dbReference type="InterPro" id="IPR036068">
    <property type="entry name" value="Nicotinate_pribotase-like_C"/>
</dbReference>
<dbReference type="NCBIfam" id="TIGR01514">
    <property type="entry name" value="NAPRTase"/>
    <property type="match status" value="1"/>
</dbReference>
<dbReference type="NCBIfam" id="NF003704">
    <property type="entry name" value="PRK05321.1"/>
    <property type="match status" value="1"/>
</dbReference>
<dbReference type="PANTHER" id="PTHR11098">
    <property type="entry name" value="NICOTINATE PHOSPHORIBOSYLTRANSFERASE"/>
    <property type="match status" value="1"/>
</dbReference>
<dbReference type="PANTHER" id="PTHR11098:SF1">
    <property type="entry name" value="NICOTINATE PHOSPHORIBOSYLTRANSFERASE"/>
    <property type="match status" value="1"/>
</dbReference>
<dbReference type="Pfam" id="PF04095">
    <property type="entry name" value="NAPRTase"/>
    <property type="match status" value="1"/>
</dbReference>
<dbReference type="Pfam" id="PF17767">
    <property type="entry name" value="NAPRTase_N"/>
    <property type="match status" value="1"/>
</dbReference>
<dbReference type="PIRSF" id="PIRSF000484">
    <property type="entry name" value="NAPRT"/>
    <property type="match status" value="1"/>
</dbReference>
<dbReference type="SUPFAM" id="SSF51690">
    <property type="entry name" value="Nicotinate/Quinolinate PRTase C-terminal domain-like"/>
    <property type="match status" value="1"/>
</dbReference>
<dbReference type="SUPFAM" id="SSF54675">
    <property type="entry name" value="Nicotinate/Quinolinate PRTase N-terminal domain-like"/>
    <property type="match status" value="1"/>
</dbReference>
<organism>
    <name type="scientific">Burkholderia mallei (strain ATCC 23344)</name>
    <dbReference type="NCBI Taxonomy" id="243160"/>
    <lineage>
        <taxon>Bacteria</taxon>
        <taxon>Pseudomonadati</taxon>
        <taxon>Pseudomonadota</taxon>
        <taxon>Betaproteobacteria</taxon>
        <taxon>Burkholderiales</taxon>
        <taxon>Burkholderiaceae</taxon>
        <taxon>Burkholderia</taxon>
        <taxon>pseudomallei group</taxon>
    </lineage>
</organism>
<gene>
    <name evidence="1" type="primary">pncB</name>
    <name type="ordered locus">BMA0510</name>
</gene>
<protein>
    <recommendedName>
        <fullName evidence="1">Nicotinate phosphoribosyltransferase</fullName>
        <shortName evidence="1">NAPRTase</shortName>
        <ecNumber evidence="1">6.3.4.21</ecNumber>
    </recommendedName>
</protein>
<keyword id="KW-0436">Ligase</keyword>
<keyword id="KW-0597">Phosphoprotein</keyword>
<keyword id="KW-0662">Pyridine nucleotide biosynthesis</keyword>
<keyword id="KW-1185">Reference proteome</keyword>
<comment type="function">
    <text evidence="1">Catalyzes the synthesis of beta-nicotinate D-ribonucleotide from nicotinate and 5-phospho-D-ribose 1-phosphate at the expense of ATP.</text>
</comment>
<comment type="catalytic activity">
    <reaction evidence="1">
        <text>nicotinate + 5-phospho-alpha-D-ribose 1-diphosphate + ATP + H2O = nicotinate beta-D-ribonucleotide + ADP + phosphate + diphosphate</text>
        <dbReference type="Rhea" id="RHEA:36163"/>
        <dbReference type="ChEBI" id="CHEBI:15377"/>
        <dbReference type="ChEBI" id="CHEBI:30616"/>
        <dbReference type="ChEBI" id="CHEBI:32544"/>
        <dbReference type="ChEBI" id="CHEBI:33019"/>
        <dbReference type="ChEBI" id="CHEBI:43474"/>
        <dbReference type="ChEBI" id="CHEBI:57502"/>
        <dbReference type="ChEBI" id="CHEBI:58017"/>
        <dbReference type="ChEBI" id="CHEBI:456216"/>
        <dbReference type="EC" id="6.3.4.21"/>
    </reaction>
</comment>
<comment type="pathway">
    <text evidence="1">Cofactor biosynthesis; NAD(+) biosynthesis; nicotinate D-ribonucleotide from nicotinate: step 1/1.</text>
</comment>
<comment type="PTM">
    <text evidence="1">Transiently phosphorylated on a His residue during the reaction cycle. Phosphorylation strongly increases the affinity for substrates and increases the rate of nicotinate D-ribonucleotide production. Dephosphorylation regenerates the low-affinity form of the enzyme, leading to product release.</text>
</comment>
<comment type="similarity">
    <text evidence="1">Belongs to the NAPRTase family.</text>
</comment>
<name>PNCB_BURMA</name>
<proteinExistence type="inferred from homology"/>
<feature type="chain" id="PRO_0000205825" description="Nicotinate phosphoribosyltransferase">
    <location>
        <begin position="1"/>
        <end position="399"/>
    </location>
</feature>
<feature type="modified residue" description="Phosphohistidine; by autocatalysis" evidence="1">
    <location>
        <position position="217"/>
    </location>
</feature>
<reference key="1">
    <citation type="journal article" date="2004" name="Proc. Natl. Acad. Sci. U.S.A.">
        <title>Structural flexibility in the Burkholderia mallei genome.</title>
        <authorList>
            <person name="Nierman W.C."/>
            <person name="DeShazer D."/>
            <person name="Kim H.S."/>
            <person name="Tettelin H."/>
            <person name="Nelson K.E."/>
            <person name="Feldblyum T.V."/>
            <person name="Ulrich R.L."/>
            <person name="Ronning C.M."/>
            <person name="Brinkac L.M."/>
            <person name="Daugherty S.C."/>
            <person name="Davidsen T.D."/>
            <person name="DeBoy R.T."/>
            <person name="Dimitrov G."/>
            <person name="Dodson R.J."/>
            <person name="Durkin A.S."/>
            <person name="Gwinn M.L."/>
            <person name="Haft D.H."/>
            <person name="Khouri H.M."/>
            <person name="Kolonay J.F."/>
            <person name="Madupu R."/>
            <person name="Mohammoud Y."/>
            <person name="Nelson W.C."/>
            <person name="Radune D."/>
            <person name="Romero C.M."/>
            <person name="Sarria S."/>
            <person name="Selengut J."/>
            <person name="Shamblin C."/>
            <person name="Sullivan S.A."/>
            <person name="White O."/>
            <person name="Yu Y."/>
            <person name="Zafar N."/>
            <person name="Zhou L."/>
            <person name="Fraser C.M."/>
        </authorList>
    </citation>
    <scope>NUCLEOTIDE SEQUENCE [LARGE SCALE GENOMIC DNA]</scope>
    <source>
        <strain>ATCC 23344</strain>
    </source>
</reference>
<evidence type="ECO:0000255" key="1">
    <source>
        <dbReference type="HAMAP-Rule" id="MF_00570"/>
    </source>
</evidence>
<sequence>MIITSLLDTDLYKFTMMQVVLHHFPAASVEYRFKCRTPGVDLVPYIDEIRAEVRSLCELRFTDSELDYLRRLRFVKSDFVDFLALFHLNEKYISITPSQKGGGEIDIEIKGPWLHTILFEIPVLAIVNEVYFRNTQRRPDYREGRGRLREKIKLLGAKPEFADCKIADYGTRRRFSKVWHEEVLRTLQDGLGPQFAGTSNVYYAMTHEITPLGTMAHEYLQACQALGPRLRDSQTYGLEMWAKEYRGDLGIALSDVYGMDAFLRDFDMYFCKLFDGARHDSGDPFDWGERLIKHYEENRCDPRTKVLVFSDALDIPKVMQLYARFRGRCKLAFGVGTNLTNDLGYQPLQIVIKMVRCNGQPVAKLSDSPGKSMCDDKAYLAYLRQVFGITQPPDDDAGK</sequence>